<proteinExistence type="inferred from homology"/>
<keyword id="KW-0229">DNA integration</keyword>
<keyword id="KW-0233">DNA recombination</keyword>
<keyword id="KW-0238">DNA-binding</keyword>
<keyword id="KW-0378">Hydrolase</keyword>
<keyword id="KW-1185">Reference proteome</keyword>
<keyword id="KW-0808">Transferase</keyword>
<keyword id="KW-1179">Viral genome integration</keyword>
<keyword id="KW-1160">Virus entry into host cell</keyword>
<name>VINT_BPL2</name>
<organism>
    <name type="scientific">Acholeplasma phage L2</name>
    <name type="common">Bacteriophage L2</name>
    <dbReference type="NCBI Taxonomy" id="46014"/>
    <lineage>
        <taxon>Viruses</taxon>
        <taxon>Viruses incertae sedis</taxon>
        <taxon>Plasmaviridae</taxon>
        <taxon>Plasmavirus</taxon>
    </lineage>
</organism>
<sequence>MNIEKALMNYYELTLASYEDSTNRYHYRIVQHLIKGLKYIKVKKLEKVDITIGYKLIDYLKNHTHNGNNSIKKIINYLRKVMQHYRITTSIIDLPHLPNDTKPFERFYHDDLELIMTYTKNLNSSKNSITYKSFIRLLLDSGLRVSEALNIKISDMDFKNKVIRVLSSKTRKQRYAPFSSFSLKYIKELIEVNPKRDYLFYNFIKDRQTNKNDIKLFYKRLKKHLNLERIHTHRFRKTFASILIENGLNIDDLQKIFDHSRIETTIKYVQHNEKRALQEYKKYNDWGLN</sequence>
<accession>P42540</accession>
<organismHost>
    <name type="scientific">Mycoplasma</name>
    <dbReference type="NCBI Taxonomy" id="2093"/>
</organismHost>
<feature type="chain" id="PRO_0000197502" description="Probable integrase/recombinase">
    <location>
        <begin position="1"/>
        <end position="289"/>
    </location>
</feature>
<feature type="domain" description="Core-binding (CB)" evidence="3">
    <location>
        <begin position="1"/>
        <end position="86"/>
    </location>
</feature>
<feature type="domain" description="Tyr recombinase" evidence="2">
    <location>
        <begin position="102"/>
        <end position="281"/>
    </location>
</feature>
<feature type="active site" evidence="2">
    <location>
        <position position="144"/>
    </location>
</feature>
<feature type="active site" evidence="2">
    <location>
        <position position="169"/>
    </location>
</feature>
<feature type="active site" evidence="2">
    <location>
        <position position="233"/>
    </location>
</feature>
<feature type="active site" evidence="2">
    <location>
        <position position="236"/>
    </location>
</feature>
<feature type="active site" evidence="2">
    <location>
        <position position="259"/>
    </location>
</feature>
<feature type="active site" description="O-(3'-phospho-DNA)-tyrosine intermediate" evidence="2">
    <location>
        <position position="268"/>
    </location>
</feature>
<reference key="1">
    <citation type="journal article" date="1994" name="Gene">
        <title>Sequence analysis of a unique temperature phage: mycoplasma virus L2.</title>
        <authorList>
            <person name="Maniloff J."/>
            <person name="Kampo G.J."/>
            <person name="Dascher C.C."/>
        </authorList>
    </citation>
    <scope>NUCLEOTIDE SEQUENCE [LARGE SCALE GENOMIC DNA]</scope>
</reference>
<evidence type="ECO:0000250" key="1">
    <source>
        <dbReference type="UniProtKB" id="P36932"/>
    </source>
</evidence>
<evidence type="ECO:0000255" key="2">
    <source>
        <dbReference type="PROSITE-ProRule" id="PRU01246"/>
    </source>
</evidence>
<evidence type="ECO:0000255" key="3">
    <source>
        <dbReference type="PROSITE-ProRule" id="PRU01248"/>
    </source>
</evidence>
<evidence type="ECO:0000305" key="4"/>
<protein>
    <recommendedName>
        <fullName>Probable integrase/recombinase</fullName>
        <ecNumber evidence="1">2.7.7.-</ecNumber>
        <ecNumber evidence="1">3.1.-.-</ecNumber>
    </recommendedName>
    <alternativeName>
        <fullName>ORF5</fullName>
    </alternativeName>
</protein>
<dbReference type="EC" id="2.7.7.-" evidence="1"/>
<dbReference type="EC" id="3.1.-.-" evidence="1"/>
<dbReference type="EMBL" id="L13696">
    <property type="protein sequence ID" value="AAA87961.1"/>
    <property type="molecule type" value="Genomic_DNA"/>
</dbReference>
<dbReference type="RefSeq" id="NP_040813.1">
    <property type="nucleotide sequence ID" value="NC_001447.1"/>
</dbReference>
<dbReference type="SMR" id="P42540"/>
<dbReference type="GeneID" id="1261006"/>
<dbReference type="KEGG" id="vg:1261006"/>
<dbReference type="OrthoDB" id="3956at10239"/>
<dbReference type="Proteomes" id="UP000001573">
    <property type="component" value="Genome"/>
</dbReference>
<dbReference type="GO" id="GO:0003677">
    <property type="term" value="F:DNA binding"/>
    <property type="evidence" value="ECO:0007669"/>
    <property type="project" value="UniProtKB-KW"/>
</dbReference>
<dbReference type="GO" id="GO:0016787">
    <property type="term" value="F:hydrolase activity"/>
    <property type="evidence" value="ECO:0007669"/>
    <property type="project" value="UniProtKB-KW"/>
</dbReference>
<dbReference type="GO" id="GO:0016740">
    <property type="term" value="F:transferase activity"/>
    <property type="evidence" value="ECO:0007669"/>
    <property type="project" value="UniProtKB-KW"/>
</dbReference>
<dbReference type="GO" id="GO:0015074">
    <property type="term" value="P:DNA integration"/>
    <property type="evidence" value="ECO:0007669"/>
    <property type="project" value="UniProtKB-KW"/>
</dbReference>
<dbReference type="GO" id="GO:0006310">
    <property type="term" value="P:DNA recombination"/>
    <property type="evidence" value="ECO:0007669"/>
    <property type="project" value="UniProtKB-KW"/>
</dbReference>
<dbReference type="GO" id="GO:0075713">
    <property type="term" value="P:establishment of integrated proviral latency"/>
    <property type="evidence" value="ECO:0007669"/>
    <property type="project" value="UniProtKB-KW"/>
</dbReference>
<dbReference type="GO" id="GO:0046718">
    <property type="term" value="P:symbiont entry into host cell"/>
    <property type="evidence" value="ECO:0007669"/>
    <property type="project" value="UniProtKB-KW"/>
</dbReference>
<dbReference type="GO" id="GO:0044826">
    <property type="term" value="P:viral genome integration into host DNA"/>
    <property type="evidence" value="ECO:0007669"/>
    <property type="project" value="UniProtKB-KW"/>
</dbReference>
<dbReference type="CDD" id="cd00397">
    <property type="entry name" value="DNA_BRE_C"/>
    <property type="match status" value="1"/>
</dbReference>
<dbReference type="Gene3D" id="1.10.443.10">
    <property type="entry name" value="Intergrase catalytic core"/>
    <property type="match status" value="1"/>
</dbReference>
<dbReference type="InterPro" id="IPR044068">
    <property type="entry name" value="CB"/>
</dbReference>
<dbReference type="InterPro" id="IPR011010">
    <property type="entry name" value="DNA_brk_join_enz"/>
</dbReference>
<dbReference type="InterPro" id="IPR013762">
    <property type="entry name" value="Integrase-like_cat_sf"/>
</dbReference>
<dbReference type="InterPro" id="IPR002104">
    <property type="entry name" value="Integrase_catalytic"/>
</dbReference>
<dbReference type="InterPro" id="IPR050090">
    <property type="entry name" value="Tyrosine_recombinase_XerCD"/>
</dbReference>
<dbReference type="PANTHER" id="PTHR30349:SF41">
    <property type="entry name" value="INTEGRASE_RECOMBINASE PROTEIN MJ0367-RELATED"/>
    <property type="match status" value="1"/>
</dbReference>
<dbReference type="PANTHER" id="PTHR30349">
    <property type="entry name" value="PHAGE INTEGRASE-RELATED"/>
    <property type="match status" value="1"/>
</dbReference>
<dbReference type="Pfam" id="PF00589">
    <property type="entry name" value="Phage_integrase"/>
    <property type="match status" value="1"/>
</dbReference>
<dbReference type="SUPFAM" id="SSF56349">
    <property type="entry name" value="DNA breaking-rejoining enzymes"/>
    <property type="match status" value="1"/>
</dbReference>
<dbReference type="PROSITE" id="PS51900">
    <property type="entry name" value="CB"/>
    <property type="match status" value="1"/>
</dbReference>
<dbReference type="PROSITE" id="PS51898">
    <property type="entry name" value="TYR_RECOMBINASE"/>
    <property type="match status" value="1"/>
</dbReference>
<comment type="function">
    <text>May function as an integrase.</text>
</comment>
<comment type="similarity">
    <text evidence="4">Belongs to the 'phage' integrase family.</text>
</comment>